<name>GPMB_SALPA</name>
<sequence length="215" mass="23868">MLQVYLVRHGETQWNAERRIQGQSDSPLTAKGEQQAMQVGERARSLGITHIISSDLGRTKRTAEIIAQACGCDITFDSRLRELDMGVLEKRQIDSLTEEEEGWRRQLVNGTQDGRIPGGESMQELSDRVHAALASCLELPQGSRPLLVSHGIALGCLVSTILGLPAWAERRLRLRNCSISRIDYQESQWLASGWVVETAGDVSHLDAPALDELQR</sequence>
<gene>
    <name evidence="1" type="primary">gpmB</name>
    <name type="ordered locus">SPA4395</name>
</gene>
<accession>Q5PK44</accession>
<comment type="catalytic activity">
    <reaction evidence="1">
        <text>(2R)-2-phosphoglycerate = (2R)-3-phosphoglycerate</text>
        <dbReference type="Rhea" id="RHEA:15901"/>
        <dbReference type="ChEBI" id="CHEBI:58272"/>
        <dbReference type="ChEBI" id="CHEBI:58289"/>
    </reaction>
</comment>
<comment type="pathway">
    <text evidence="1">Carbohydrate degradation; glycolysis; pyruvate from D-glyceraldehyde 3-phosphate: step 3/5.</text>
</comment>
<comment type="similarity">
    <text evidence="1">Belongs to the phosphoglycerate mutase family. GpmB subfamily.</text>
</comment>
<keyword id="KW-0324">Glycolysis</keyword>
<keyword id="KW-0413">Isomerase</keyword>
<feature type="chain" id="PRO_1000064129" description="Probable phosphoglycerate mutase GpmB">
    <location>
        <begin position="1"/>
        <end position="215"/>
    </location>
</feature>
<feature type="active site" description="Tele-phosphohistidine intermediate" evidence="1">
    <location>
        <position position="9"/>
    </location>
</feature>
<feature type="active site" description="Proton donor/acceptor" evidence="1">
    <location>
        <position position="82"/>
    </location>
</feature>
<feature type="binding site" evidence="1">
    <location>
        <begin position="8"/>
        <end position="15"/>
    </location>
    <ligand>
        <name>substrate</name>
    </ligand>
</feature>
<feature type="binding site" evidence="1">
    <location>
        <begin position="21"/>
        <end position="22"/>
    </location>
    <ligand>
        <name>substrate</name>
    </ligand>
</feature>
<feature type="binding site" evidence="1">
    <location>
        <position position="58"/>
    </location>
    <ligand>
        <name>substrate</name>
    </ligand>
</feature>
<feature type="binding site" evidence="1">
    <location>
        <position position="60"/>
    </location>
    <ligand>
        <name>substrate</name>
    </ligand>
</feature>
<feature type="binding site" evidence="1">
    <location>
        <begin position="82"/>
        <end position="85"/>
    </location>
    <ligand>
        <name>substrate</name>
    </ligand>
</feature>
<feature type="binding site" evidence="1">
    <location>
        <begin position="104"/>
        <end position="105"/>
    </location>
    <ligand>
        <name>substrate</name>
    </ligand>
</feature>
<feature type="binding site" evidence="1">
    <location>
        <begin position="151"/>
        <end position="152"/>
    </location>
    <ligand>
        <name>substrate</name>
    </ligand>
</feature>
<feature type="site" description="Transition state stabilizer" evidence="1">
    <location>
        <position position="150"/>
    </location>
</feature>
<dbReference type="EC" id="5.4.2.-" evidence="1"/>
<dbReference type="EMBL" id="CP000026">
    <property type="protein sequence ID" value="AAV80118.1"/>
    <property type="molecule type" value="Genomic_DNA"/>
</dbReference>
<dbReference type="RefSeq" id="WP_000942363.1">
    <property type="nucleotide sequence ID" value="NC_006511.1"/>
</dbReference>
<dbReference type="SMR" id="Q5PK44"/>
<dbReference type="KEGG" id="spt:SPA4395"/>
<dbReference type="HOGENOM" id="CLU_033323_9_5_6"/>
<dbReference type="UniPathway" id="UPA00109">
    <property type="reaction ID" value="UER00186"/>
</dbReference>
<dbReference type="Proteomes" id="UP000008185">
    <property type="component" value="Chromosome"/>
</dbReference>
<dbReference type="GO" id="GO:0005737">
    <property type="term" value="C:cytoplasm"/>
    <property type="evidence" value="ECO:0007669"/>
    <property type="project" value="TreeGrafter"/>
</dbReference>
<dbReference type="GO" id="GO:0016791">
    <property type="term" value="F:phosphatase activity"/>
    <property type="evidence" value="ECO:0007669"/>
    <property type="project" value="TreeGrafter"/>
</dbReference>
<dbReference type="GO" id="GO:0004619">
    <property type="term" value="F:phosphoglycerate mutase activity"/>
    <property type="evidence" value="ECO:0007669"/>
    <property type="project" value="UniProtKB-UniRule"/>
</dbReference>
<dbReference type="GO" id="GO:0006096">
    <property type="term" value="P:glycolytic process"/>
    <property type="evidence" value="ECO:0007669"/>
    <property type="project" value="UniProtKB-UniRule"/>
</dbReference>
<dbReference type="CDD" id="cd07067">
    <property type="entry name" value="HP_PGM_like"/>
    <property type="match status" value="1"/>
</dbReference>
<dbReference type="Gene3D" id="3.40.50.1240">
    <property type="entry name" value="Phosphoglycerate mutase-like"/>
    <property type="match status" value="1"/>
</dbReference>
<dbReference type="HAMAP" id="MF_01040">
    <property type="entry name" value="PGAM_GpmB"/>
    <property type="match status" value="1"/>
</dbReference>
<dbReference type="InterPro" id="IPR013078">
    <property type="entry name" value="His_Pase_superF_clade-1"/>
</dbReference>
<dbReference type="InterPro" id="IPR029033">
    <property type="entry name" value="His_PPase_superfam"/>
</dbReference>
<dbReference type="InterPro" id="IPR001345">
    <property type="entry name" value="PG/BPGM_mutase_AS"/>
</dbReference>
<dbReference type="InterPro" id="IPR050275">
    <property type="entry name" value="PGM_Phosphatase"/>
</dbReference>
<dbReference type="InterPro" id="IPR023086">
    <property type="entry name" value="Phosphoglycerate_mutase_GpmB"/>
</dbReference>
<dbReference type="NCBIfam" id="NF002901">
    <property type="entry name" value="PRK03482.1"/>
    <property type="match status" value="1"/>
</dbReference>
<dbReference type="PANTHER" id="PTHR48100">
    <property type="entry name" value="BROAD-SPECIFICITY PHOSPHATASE YOR283W-RELATED"/>
    <property type="match status" value="1"/>
</dbReference>
<dbReference type="PANTHER" id="PTHR48100:SF1">
    <property type="entry name" value="HISTIDINE PHOSPHATASE FAMILY PROTEIN-RELATED"/>
    <property type="match status" value="1"/>
</dbReference>
<dbReference type="Pfam" id="PF00300">
    <property type="entry name" value="His_Phos_1"/>
    <property type="match status" value="1"/>
</dbReference>
<dbReference type="SMART" id="SM00855">
    <property type="entry name" value="PGAM"/>
    <property type="match status" value="1"/>
</dbReference>
<dbReference type="SUPFAM" id="SSF53254">
    <property type="entry name" value="Phosphoglycerate mutase-like"/>
    <property type="match status" value="1"/>
</dbReference>
<dbReference type="PROSITE" id="PS00175">
    <property type="entry name" value="PG_MUTASE"/>
    <property type="match status" value="1"/>
</dbReference>
<organism>
    <name type="scientific">Salmonella paratyphi A (strain ATCC 9150 / SARB42)</name>
    <dbReference type="NCBI Taxonomy" id="295319"/>
    <lineage>
        <taxon>Bacteria</taxon>
        <taxon>Pseudomonadati</taxon>
        <taxon>Pseudomonadota</taxon>
        <taxon>Gammaproteobacteria</taxon>
        <taxon>Enterobacterales</taxon>
        <taxon>Enterobacteriaceae</taxon>
        <taxon>Salmonella</taxon>
    </lineage>
</organism>
<proteinExistence type="inferred from homology"/>
<reference key="1">
    <citation type="journal article" date="2004" name="Nat. Genet.">
        <title>Comparison of genome degradation in Paratyphi A and Typhi, human-restricted serovars of Salmonella enterica that cause typhoid.</title>
        <authorList>
            <person name="McClelland M."/>
            <person name="Sanderson K.E."/>
            <person name="Clifton S.W."/>
            <person name="Latreille P."/>
            <person name="Porwollik S."/>
            <person name="Sabo A."/>
            <person name="Meyer R."/>
            <person name="Bieri T."/>
            <person name="Ozersky P."/>
            <person name="McLellan M."/>
            <person name="Harkins C.R."/>
            <person name="Wang C."/>
            <person name="Nguyen C."/>
            <person name="Berghoff A."/>
            <person name="Elliott G."/>
            <person name="Kohlberg S."/>
            <person name="Strong C."/>
            <person name="Du F."/>
            <person name="Carter J."/>
            <person name="Kremizki C."/>
            <person name="Layman D."/>
            <person name="Leonard S."/>
            <person name="Sun H."/>
            <person name="Fulton L."/>
            <person name="Nash W."/>
            <person name="Miner T."/>
            <person name="Minx P."/>
            <person name="Delehaunty K."/>
            <person name="Fronick C."/>
            <person name="Magrini V."/>
            <person name="Nhan M."/>
            <person name="Warren W."/>
            <person name="Florea L."/>
            <person name="Spieth J."/>
            <person name="Wilson R.K."/>
        </authorList>
    </citation>
    <scope>NUCLEOTIDE SEQUENCE [LARGE SCALE GENOMIC DNA]</scope>
    <source>
        <strain>ATCC 9150 / SARB42</strain>
    </source>
</reference>
<protein>
    <recommendedName>
        <fullName evidence="1">Probable phosphoglycerate mutase GpmB</fullName>
        <ecNumber evidence="1">5.4.2.-</ecNumber>
    </recommendedName>
    <alternativeName>
        <fullName evidence="1">PGAM</fullName>
    </alternativeName>
    <alternativeName>
        <fullName evidence="1">Phosphoglyceromutase</fullName>
    </alternativeName>
</protein>
<evidence type="ECO:0000255" key="1">
    <source>
        <dbReference type="HAMAP-Rule" id="MF_01040"/>
    </source>
</evidence>